<name>CYSC_SHEHH</name>
<reference key="1">
    <citation type="submission" date="2008-01" db="EMBL/GenBank/DDBJ databases">
        <title>Complete sequence of Shewanella halifaxensis HAW-EB4.</title>
        <authorList>
            <consortium name="US DOE Joint Genome Institute"/>
            <person name="Copeland A."/>
            <person name="Lucas S."/>
            <person name="Lapidus A."/>
            <person name="Glavina del Rio T."/>
            <person name="Dalin E."/>
            <person name="Tice H."/>
            <person name="Bruce D."/>
            <person name="Goodwin L."/>
            <person name="Pitluck S."/>
            <person name="Sims D."/>
            <person name="Brettin T."/>
            <person name="Detter J.C."/>
            <person name="Han C."/>
            <person name="Kuske C.R."/>
            <person name="Schmutz J."/>
            <person name="Larimer F."/>
            <person name="Land M."/>
            <person name="Hauser L."/>
            <person name="Kyrpides N."/>
            <person name="Kim E."/>
            <person name="Zhao J.-S."/>
            <person name="Richardson P."/>
        </authorList>
    </citation>
    <scope>NUCLEOTIDE SEQUENCE [LARGE SCALE GENOMIC DNA]</scope>
    <source>
        <strain>HAW-EB4</strain>
    </source>
</reference>
<dbReference type="EC" id="2.7.1.25" evidence="1"/>
<dbReference type="EMBL" id="CP000931">
    <property type="protein sequence ID" value="ABZ78073.1"/>
    <property type="molecule type" value="Genomic_DNA"/>
</dbReference>
<dbReference type="RefSeq" id="WP_012278593.1">
    <property type="nucleotide sequence ID" value="NC_010334.1"/>
</dbReference>
<dbReference type="SMR" id="B0TTD2"/>
<dbReference type="STRING" id="458817.Shal_3530"/>
<dbReference type="KEGG" id="shl:Shal_3530"/>
<dbReference type="eggNOG" id="COG0529">
    <property type="taxonomic scope" value="Bacteria"/>
</dbReference>
<dbReference type="HOGENOM" id="CLU_046932_1_0_6"/>
<dbReference type="OrthoDB" id="9804504at2"/>
<dbReference type="UniPathway" id="UPA00140">
    <property type="reaction ID" value="UER00205"/>
</dbReference>
<dbReference type="Proteomes" id="UP000001317">
    <property type="component" value="Chromosome"/>
</dbReference>
<dbReference type="GO" id="GO:0004020">
    <property type="term" value="F:adenylylsulfate kinase activity"/>
    <property type="evidence" value="ECO:0007669"/>
    <property type="project" value="UniProtKB-UniRule"/>
</dbReference>
<dbReference type="GO" id="GO:0005524">
    <property type="term" value="F:ATP binding"/>
    <property type="evidence" value="ECO:0007669"/>
    <property type="project" value="UniProtKB-UniRule"/>
</dbReference>
<dbReference type="GO" id="GO:0070814">
    <property type="term" value="P:hydrogen sulfide biosynthetic process"/>
    <property type="evidence" value="ECO:0007669"/>
    <property type="project" value="UniProtKB-UniRule"/>
</dbReference>
<dbReference type="GO" id="GO:0000103">
    <property type="term" value="P:sulfate assimilation"/>
    <property type="evidence" value="ECO:0007669"/>
    <property type="project" value="UniProtKB-UniRule"/>
</dbReference>
<dbReference type="CDD" id="cd02027">
    <property type="entry name" value="APSK"/>
    <property type="match status" value="1"/>
</dbReference>
<dbReference type="FunFam" id="3.40.50.300:FF:000212">
    <property type="entry name" value="Adenylyl-sulfate kinase"/>
    <property type="match status" value="1"/>
</dbReference>
<dbReference type="Gene3D" id="3.40.50.300">
    <property type="entry name" value="P-loop containing nucleotide triphosphate hydrolases"/>
    <property type="match status" value="1"/>
</dbReference>
<dbReference type="HAMAP" id="MF_00065">
    <property type="entry name" value="Adenylyl_sulf_kinase"/>
    <property type="match status" value="1"/>
</dbReference>
<dbReference type="InterPro" id="IPR002891">
    <property type="entry name" value="APS_kinase"/>
</dbReference>
<dbReference type="InterPro" id="IPR027417">
    <property type="entry name" value="P-loop_NTPase"/>
</dbReference>
<dbReference type="NCBIfam" id="TIGR00455">
    <property type="entry name" value="apsK"/>
    <property type="match status" value="1"/>
</dbReference>
<dbReference type="NCBIfam" id="NF003013">
    <property type="entry name" value="PRK03846.1"/>
    <property type="match status" value="1"/>
</dbReference>
<dbReference type="PANTHER" id="PTHR11055:SF63">
    <property type="entry name" value="ADENYLYL-SULFATE KINASE 1, CHLOROPLASTIC"/>
    <property type="match status" value="1"/>
</dbReference>
<dbReference type="PANTHER" id="PTHR11055">
    <property type="entry name" value="BIFUNCTIONAL 3'-PHOSPHOADENOSINE 5'-PHOSPHOSULFATE SYNTHASE"/>
    <property type="match status" value="1"/>
</dbReference>
<dbReference type="Pfam" id="PF01583">
    <property type="entry name" value="APS_kinase"/>
    <property type="match status" value="1"/>
</dbReference>
<dbReference type="SUPFAM" id="SSF52540">
    <property type="entry name" value="P-loop containing nucleoside triphosphate hydrolases"/>
    <property type="match status" value="1"/>
</dbReference>
<protein>
    <recommendedName>
        <fullName evidence="1">Adenylyl-sulfate kinase</fullName>
        <ecNumber evidence="1">2.7.1.25</ecNumber>
    </recommendedName>
    <alternativeName>
        <fullName evidence="1">APS kinase</fullName>
    </alternativeName>
    <alternativeName>
        <fullName evidence="1">ATP adenosine-5'-phosphosulfate 3'-phosphotransferase</fullName>
    </alternativeName>
    <alternativeName>
        <fullName evidence="1">Adenosine-5'-phosphosulfate kinase</fullName>
    </alternativeName>
</protein>
<proteinExistence type="inferred from homology"/>
<keyword id="KW-0067">ATP-binding</keyword>
<keyword id="KW-0418">Kinase</keyword>
<keyword id="KW-0547">Nucleotide-binding</keyword>
<keyword id="KW-0597">Phosphoprotein</keyword>
<keyword id="KW-0808">Transferase</keyword>
<sequence>MSDIVWHQHSIDKQSRADQKGQKPILLWFTGLSGSGKSTLAGALERALFDAGFHTYLLDGDNVRHGLCKDLGFSLDDRDENLRRVGEVAKLMVDAGLVVLSAFISPTRAERERVRALFDDGQFIEVHVSTPIEVCEARDPKGLYSKARAGEIKNFTGISASYEVPTAAELIIDTSKGDLATQVSALLDYLAAIQVIDSEKLKKAI</sequence>
<gene>
    <name evidence="1" type="primary">cysC</name>
    <name type="ordered locus">Shal_3530</name>
</gene>
<accession>B0TTD2</accession>
<evidence type="ECO:0000255" key="1">
    <source>
        <dbReference type="HAMAP-Rule" id="MF_00065"/>
    </source>
</evidence>
<comment type="function">
    <text evidence="1">Catalyzes the synthesis of activated sulfate.</text>
</comment>
<comment type="catalytic activity">
    <reaction evidence="1">
        <text>adenosine 5'-phosphosulfate + ATP = 3'-phosphoadenylyl sulfate + ADP + H(+)</text>
        <dbReference type="Rhea" id="RHEA:24152"/>
        <dbReference type="ChEBI" id="CHEBI:15378"/>
        <dbReference type="ChEBI" id="CHEBI:30616"/>
        <dbReference type="ChEBI" id="CHEBI:58243"/>
        <dbReference type="ChEBI" id="CHEBI:58339"/>
        <dbReference type="ChEBI" id="CHEBI:456216"/>
        <dbReference type="EC" id="2.7.1.25"/>
    </reaction>
</comment>
<comment type="pathway">
    <text evidence="1">Sulfur metabolism; hydrogen sulfide biosynthesis; sulfite from sulfate: step 2/3.</text>
</comment>
<comment type="similarity">
    <text evidence="1">Belongs to the APS kinase family.</text>
</comment>
<organism>
    <name type="scientific">Shewanella halifaxensis (strain HAW-EB4)</name>
    <dbReference type="NCBI Taxonomy" id="458817"/>
    <lineage>
        <taxon>Bacteria</taxon>
        <taxon>Pseudomonadati</taxon>
        <taxon>Pseudomonadota</taxon>
        <taxon>Gammaproteobacteria</taxon>
        <taxon>Alteromonadales</taxon>
        <taxon>Shewanellaceae</taxon>
        <taxon>Shewanella</taxon>
    </lineage>
</organism>
<feature type="chain" id="PRO_1000075090" description="Adenylyl-sulfate kinase">
    <location>
        <begin position="1"/>
        <end position="205"/>
    </location>
</feature>
<feature type="active site" description="Phosphoserine intermediate" evidence="1">
    <location>
        <position position="105"/>
    </location>
</feature>
<feature type="binding site" evidence="1">
    <location>
        <begin position="31"/>
        <end position="38"/>
    </location>
    <ligand>
        <name>ATP</name>
        <dbReference type="ChEBI" id="CHEBI:30616"/>
    </ligand>
</feature>